<protein>
    <recommendedName>
        <fullName>Protein P200</fullName>
    </recommendedName>
</protein>
<name>P200_MYCPN</name>
<evidence type="ECO:0000256" key="1">
    <source>
        <dbReference type="SAM" id="MobiDB-lite"/>
    </source>
</evidence>
<evidence type="ECO:0000269" key="2">
    <source>
    </source>
</evidence>
<evidence type="ECO:0000305" key="3"/>
<accession>P75211</accession>
<accession>Q50346</accession>
<proteinExistence type="evidence at protein level"/>
<feature type="chain" id="PRO_0000058128" description="Protein P200">
    <location>
        <begin position="1"/>
        <end position="1036"/>
    </location>
</feature>
<feature type="repeat" description="1">
    <location>
        <begin position="718"/>
        <end position="723"/>
    </location>
</feature>
<feature type="repeat" description="2">
    <location>
        <begin position="738"/>
        <end position="743"/>
    </location>
</feature>
<feature type="repeat" description="3">
    <location>
        <begin position="776"/>
        <end position="781"/>
    </location>
</feature>
<feature type="region of interest" description="Disordered" evidence="1">
    <location>
        <begin position="697"/>
        <end position="727"/>
    </location>
</feature>
<feature type="region of interest" description="3 X 6 AA repeats of E-P-E-P-N-F">
    <location>
        <begin position="718"/>
        <end position="781"/>
    </location>
</feature>
<feature type="region of interest" description="Disordered" evidence="1">
    <location>
        <begin position="757"/>
        <end position="784"/>
    </location>
</feature>
<feature type="region of interest" description="Disordered" evidence="1">
    <location>
        <begin position="798"/>
        <end position="845"/>
    </location>
</feature>
<feature type="compositionally biased region" description="Acidic residues" evidence="1">
    <location>
        <begin position="707"/>
        <end position="727"/>
    </location>
</feature>
<feature type="compositionally biased region" description="Acidic residues" evidence="1">
    <location>
        <begin position="773"/>
        <end position="784"/>
    </location>
</feature>
<feature type="sequence conflict" description="In Ref. 3; CAA83569." evidence="3" ref="3">
    <original>A</original>
    <variation>P</variation>
    <location>
        <position position="641"/>
    </location>
</feature>
<gene>
    <name type="primary">p200</name>
    <name type="ordered locus">MPN_567</name>
    <name type="ORF">MP275</name>
</gene>
<keyword id="KW-0966">Cell projection</keyword>
<keyword id="KW-1185">Reference proteome</keyword>
<keyword id="KW-0677">Repeat</keyword>
<organism>
    <name type="scientific">Mycoplasma pneumoniae (strain ATCC 29342 / M129 / Subtype 1)</name>
    <name type="common">Mycoplasmoides pneumoniae</name>
    <dbReference type="NCBI Taxonomy" id="272634"/>
    <lineage>
        <taxon>Bacteria</taxon>
        <taxon>Bacillati</taxon>
        <taxon>Mycoplasmatota</taxon>
        <taxon>Mycoplasmoidales</taxon>
        <taxon>Mycoplasmoidaceae</taxon>
        <taxon>Mycoplasmoides</taxon>
    </lineage>
</organism>
<comment type="function">
    <text evidence="2">Protein cytoskeleton-associated which plays a role in gliding motility and perhaps also in mucociliary clearance.</text>
</comment>
<comment type="subcellular location">
    <subcellularLocation>
        <location evidence="2">Cell projection</location>
        <location evidence="2">Attachment organelle</location>
    </subcellularLocation>
</comment>
<comment type="disruption phenotype">
    <text evidence="2">Has impaired gliding motility, glides at a slower speed and with longer resting periods than wild-type. Binds equally well to erythrocytes and a human lung adenocarcinoma cell line, but colonizes mucin-producing cells less well than wild-type cells.</text>
</comment>
<sequence>MPKTIKKQNPSNTTLQYKKYLEQSKEKTAKAKNKDVSIDDLLKKPFLEEIKTNVLKKNKTTRASTATRGTSKVKKQIVESSIDFFDEKKRGVFIVPPAGTSVINDDRDDNKAVEETVSKTAISQNQLAHYANSELVETEQFELKPVALEHNQVLTSTRHSQERESIFEKAQLFWQIFVGDVRFGFWKNHTWIWLGFFDQHQNWYYFEVVETVELPQEHTAFIKRKQIDSCFWKPLVGNPNYGYIQNNIWVWKGFFDTKLNWIPDPVRFTLPMVEKATTTTPVVQIELPAPPTVTVVDQTSPPTAAVTVSTSQPVIEEQTTVFNQTTQLEQLSVSAPLLDQSEVETEMVEVPFVAPSTTTTQPQVVTVQAQPASSSIQFQEPIIKVEFVNESFDFKKPSQTAAAASQAPSQAINIALNEADLIDELVAVGTTATTALPQSELIQEVVVIDNGQPQQAGFHYVVDFLTSTAPLTVAEIELQEQELVNEFVTTTSRETTTFASTPVFEPVVIPTVESEEQLLENEFVESTVVSATSNEPNVASTPVVETVELTETPVSLEPLETVQLETAPVVTETVTVTEKAVEPEVLAVVEEAPLAVEPIVETSTTLAAETVEEAQVEQESTAVAVEPAIETESKATSEAQAELDWEALIGNSEYGYFDAEQNWIWTGYFDEDNKWVSTATAQTEANAEEVVLTADAETSELNTESDPSFEPEVEIQPEPEPNFDLETIPEPESIETTEPEPNFEPEVELEPEIEPNFESETEVQQELAQESSFESEPEPNFETEVEVQPESEIESKFEAEVQSEPKVSLNSDFETKPEAQAEVTPETLEVEATSEAPELQPETEATKVVDDVEEEQLDWELLIGNSNYGHYEPSGEWVWAGYFDDNQIWTPDASVEWARESDYTDLIGDEIYGRYNRKGEWIWYGYYDETGEWVLVDEHYQNHQPRISEAPRFWEQLIGNEDYGYYEDNEWKWYDGEFDSEGNWLVFHSSNAEDAKNIDIAKDIPVFESFDVDSIDADEWLDQFSDSDAKEVFGED</sequence>
<reference key="1">
    <citation type="journal article" date="1996" name="Gene">
        <title>The P200 protein of Mycoplasma pneumoniae shows common features with the cytadherence-associated proteins HMW1 and HMW3.</title>
        <authorList>
            <person name="Proft T."/>
            <person name="Hilbert H."/>
            <person name="Plagens H."/>
            <person name="Herrmann R."/>
        </authorList>
    </citation>
    <scope>NUCLEOTIDE SEQUENCE [GENOMIC DNA]</scope>
    <source>
        <strain>ATCC 29342 / M129 / Subtype 1</strain>
    </source>
</reference>
<reference key="2">
    <citation type="journal article" date="1996" name="Nucleic Acids Res.">
        <title>Complete sequence analysis of the genome of the bacterium Mycoplasma pneumoniae.</title>
        <authorList>
            <person name="Himmelreich R."/>
            <person name="Hilbert H."/>
            <person name="Plagens H."/>
            <person name="Pirkl E."/>
            <person name="Li B.-C."/>
            <person name="Herrmann R."/>
        </authorList>
    </citation>
    <scope>NUCLEOTIDE SEQUENCE [LARGE SCALE GENOMIC DNA]</scope>
    <source>
        <strain>ATCC 29342 / M129 / Subtype 1</strain>
    </source>
</reference>
<reference key="3">
    <citation type="journal article" date="1994" name="Mol. Microbiol.">
        <title>Identification and characterization of hitherto unknown Mycoplasma pneumoniae proteins.</title>
        <authorList>
            <person name="Proft T."/>
            <person name="Herrmann R."/>
        </authorList>
    </citation>
    <scope>NUCLEOTIDE SEQUENCE [GENOMIC DNA] OF 641-678</scope>
    <source>
        <strain>ATCC 29342 / M129 / Subtype 1</strain>
    </source>
</reference>
<reference key="4">
    <citation type="journal article" date="2007" name="Infect. Immun.">
        <title>Protein P200 is dispensable for Mycoplasma pneumoniae hemadsorption but not gliding motility or colonization of differentiated bronchial epithelium.</title>
        <authorList>
            <person name="Jordan J.L."/>
            <person name="Chang H.Y."/>
            <person name="Balish M.F."/>
            <person name="Holt L.S."/>
            <person name="Bose S.R."/>
            <person name="Hasselbring B.M."/>
            <person name="Waldo R.H. III"/>
            <person name="Krunkosky T.M."/>
            <person name="Krause D.C."/>
        </authorList>
    </citation>
    <scope>FUNCTION IN GLIDING MOTILITY</scope>
    <scope>SUBCELLULAR LOCATION</scope>
    <scope>DISRUPTION PHENOTYPE</scope>
    <source>
        <strain>ATCC 29342 / M129-B18</strain>
    </source>
</reference>
<dbReference type="EMBL" id="U25989">
    <property type="protein sequence ID" value="AAC99815.1"/>
    <property type="molecule type" value="Genomic_DNA"/>
</dbReference>
<dbReference type="EMBL" id="U00089">
    <property type="protein sequence ID" value="AAB95923.1"/>
    <property type="molecule type" value="Genomic_DNA"/>
</dbReference>
<dbReference type="EMBL" id="Z32646">
    <property type="protein sequence ID" value="CAA83569.1"/>
    <property type="molecule type" value="Genomic_DNA"/>
</dbReference>
<dbReference type="PIR" id="S73601">
    <property type="entry name" value="S73601"/>
</dbReference>
<dbReference type="RefSeq" id="NP_110256.1">
    <property type="nucleotide sequence ID" value="NC_000912.1"/>
</dbReference>
<dbReference type="RefSeq" id="WP_010874924.1">
    <property type="nucleotide sequence ID" value="NC_000912.1"/>
</dbReference>
<dbReference type="SMR" id="P75211"/>
<dbReference type="IntAct" id="P75211">
    <property type="interactions" value="3"/>
</dbReference>
<dbReference type="STRING" id="272634.MPN_567"/>
<dbReference type="EnsemblBacteria" id="AAB95923">
    <property type="protein sequence ID" value="AAB95923"/>
    <property type="gene ID" value="MPN_567"/>
</dbReference>
<dbReference type="KEGG" id="mpn:MPN_567"/>
<dbReference type="PATRIC" id="fig|272634.6.peg.629"/>
<dbReference type="HOGENOM" id="CLU_293347_0_0_14"/>
<dbReference type="OrthoDB" id="401459at2"/>
<dbReference type="BioCyc" id="MPNE272634:G1GJ3-929-MONOMER"/>
<dbReference type="Proteomes" id="UP000000808">
    <property type="component" value="Chromosome"/>
</dbReference>
<dbReference type="GO" id="GO:0033099">
    <property type="term" value="C:attachment organelle"/>
    <property type="evidence" value="ECO:0007669"/>
    <property type="project" value="UniProtKB-SubCell"/>
</dbReference>
<dbReference type="GO" id="GO:0042995">
    <property type="term" value="C:cell projection"/>
    <property type="evidence" value="ECO:0007669"/>
    <property type="project" value="UniProtKB-KW"/>
</dbReference>
<dbReference type="Gene3D" id="3.30.70.3600">
    <property type="match status" value="5"/>
</dbReference>
<dbReference type="InterPro" id="IPR022466">
    <property type="entry name" value="EAGR_box"/>
</dbReference>
<dbReference type="InterPro" id="IPR038145">
    <property type="entry name" value="EAGR_sf"/>
</dbReference>
<dbReference type="NCBIfam" id="TIGR03834">
    <property type="entry name" value="EAGR_box"/>
    <property type="match status" value="5"/>
</dbReference>
<dbReference type="Pfam" id="PF16713">
    <property type="entry name" value="EAGR_box"/>
    <property type="match status" value="6"/>
</dbReference>